<reference key="1">
    <citation type="journal article" date="2011" name="J. Bacteriol.">
        <title>Comparative genomics of 28 Salmonella enterica isolates: evidence for CRISPR-mediated adaptive sublineage evolution.</title>
        <authorList>
            <person name="Fricke W.F."/>
            <person name="Mammel M.K."/>
            <person name="McDermott P.F."/>
            <person name="Tartera C."/>
            <person name="White D.G."/>
            <person name="Leclerc J.E."/>
            <person name="Ravel J."/>
            <person name="Cebula T.A."/>
        </authorList>
    </citation>
    <scope>NUCLEOTIDE SEQUENCE [LARGE SCALE GENOMIC DNA]</scope>
    <source>
        <strain>SL476</strain>
    </source>
</reference>
<organism>
    <name type="scientific">Salmonella heidelberg (strain SL476)</name>
    <dbReference type="NCBI Taxonomy" id="454169"/>
    <lineage>
        <taxon>Bacteria</taxon>
        <taxon>Pseudomonadati</taxon>
        <taxon>Pseudomonadota</taxon>
        <taxon>Gammaproteobacteria</taxon>
        <taxon>Enterobacterales</taxon>
        <taxon>Enterobacteriaceae</taxon>
        <taxon>Salmonella</taxon>
    </lineage>
</organism>
<protein>
    <recommendedName>
        <fullName evidence="1">Holliday junction branch migration complex subunit RuvB</fullName>
        <ecNumber evidence="1">3.6.4.-</ecNumber>
    </recommendedName>
</protein>
<accession>B4T7Z2</accession>
<comment type="function">
    <text evidence="1">The RuvA-RuvB-RuvC complex processes Holliday junction (HJ) DNA during genetic recombination and DNA repair, while the RuvA-RuvB complex plays an important role in the rescue of blocked DNA replication forks via replication fork reversal (RFR). RuvA specifically binds to HJ cruciform DNA, conferring on it an open structure. The RuvB hexamer acts as an ATP-dependent pump, pulling dsDNA into and through the RuvAB complex. RuvB forms 2 homohexamers on either side of HJ DNA bound by 1 or 2 RuvA tetramers; 4 subunits per hexamer contact DNA at a time. Coordinated motions by a converter formed by DNA-disengaged RuvB subunits stimulates ATP hydrolysis and nucleotide exchange. Immobilization of the converter enables RuvB to convert the ATP-contained energy into a lever motion, pulling 2 nucleotides of DNA out of the RuvA tetramer per ATP hydrolyzed, thus driving DNA branch migration. The RuvB motors rotate together with the DNA substrate, which together with the progressing nucleotide cycle form the mechanistic basis for DNA recombination by continuous HJ branch migration. Branch migration allows RuvC to scan DNA until it finds its consensus sequence, where it cleaves and resolves cruciform DNA.</text>
</comment>
<comment type="catalytic activity">
    <reaction evidence="1">
        <text>ATP + H2O = ADP + phosphate + H(+)</text>
        <dbReference type="Rhea" id="RHEA:13065"/>
        <dbReference type="ChEBI" id="CHEBI:15377"/>
        <dbReference type="ChEBI" id="CHEBI:15378"/>
        <dbReference type="ChEBI" id="CHEBI:30616"/>
        <dbReference type="ChEBI" id="CHEBI:43474"/>
        <dbReference type="ChEBI" id="CHEBI:456216"/>
    </reaction>
</comment>
<comment type="subunit">
    <text evidence="1">Homohexamer. Forms an RuvA(8)-RuvB(12)-Holliday junction (HJ) complex. HJ DNA is sandwiched between 2 RuvA tetramers; dsDNA enters through RuvA and exits via RuvB. An RuvB hexamer assembles on each DNA strand where it exits the tetramer. Each RuvB hexamer is contacted by two RuvA subunits (via domain III) on 2 adjacent RuvB subunits; this complex drives branch migration. In the full resolvosome a probable DNA-RuvA(4)-RuvB(12)-RuvC(2) complex forms which resolves the HJ.</text>
</comment>
<comment type="subcellular location">
    <subcellularLocation>
        <location evidence="1">Cytoplasm</location>
    </subcellularLocation>
</comment>
<comment type="domain">
    <text evidence="1">Has 3 domains, the large (RuvB-L) and small ATPase (RuvB-S) domains and the C-terminal head (RuvB-H) domain. The head domain binds DNA, while the ATPase domains jointly bind ATP, ADP or are empty depending on the state of the subunit in the translocation cycle. During a single DNA translocation step the structure of each domain remains the same, but their relative positions change.</text>
</comment>
<comment type="similarity">
    <text evidence="1">Belongs to the RuvB family.</text>
</comment>
<evidence type="ECO:0000255" key="1">
    <source>
        <dbReference type="HAMAP-Rule" id="MF_00016"/>
    </source>
</evidence>
<feature type="chain" id="PRO_1000089673" description="Holliday junction branch migration complex subunit RuvB">
    <location>
        <begin position="1"/>
        <end position="336"/>
    </location>
</feature>
<feature type="region of interest" description="Large ATPase domain (RuvB-L)" evidence="1">
    <location>
        <begin position="4"/>
        <end position="184"/>
    </location>
</feature>
<feature type="region of interest" description="Small ATPAse domain (RuvB-S)" evidence="1">
    <location>
        <begin position="185"/>
        <end position="255"/>
    </location>
</feature>
<feature type="region of interest" description="Head domain (RuvB-H)" evidence="1">
    <location>
        <begin position="258"/>
        <end position="336"/>
    </location>
</feature>
<feature type="binding site" evidence="1">
    <location>
        <position position="23"/>
    </location>
    <ligand>
        <name>ATP</name>
        <dbReference type="ChEBI" id="CHEBI:30616"/>
    </ligand>
</feature>
<feature type="binding site" evidence="1">
    <location>
        <position position="24"/>
    </location>
    <ligand>
        <name>ATP</name>
        <dbReference type="ChEBI" id="CHEBI:30616"/>
    </ligand>
</feature>
<feature type="binding site" evidence="1">
    <location>
        <position position="65"/>
    </location>
    <ligand>
        <name>ATP</name>
        <dbReference type="ChEBI" id="CHEBI:30616"/>
    </ligand>
</feature>
<feature type="binding site" evidence="1">
    <location>
        <position position="68"/>
    </location>
    <ligand>
        <name>ATP</name>
        <dbReference type="ChEBI" id="CHEBI:30616"/>
    </ligand>
</feature>
<feature type="binding site" evidence="1">
    <location>
        <position position="69"/>
    </location>
    <ligand>
        <name>ATP</name>
        <dbReference type="ChEBI" id="CHEBI:30616"/>
    </ligand>
</feature>
<feature type="binding site" evidence="1">
    <location>
        <position position="69"/>
    </location>
    <ligand>
        <name>Mg(2+)</name>
        <dbReference type="ChEBI" id="CHEBI:18420"/>
    </ligand>
</feature>
<feature type="binding site" evidence="1">
    <location>
        <position position="70"/>
    </location>
    <ligand>
        <name>ATP</name>
        <dbReference type="ChEBI" id="CHEBI:30616"/>
    </ligand>
</feature>
<feature type="binding site" evidence="1">
    <location>
        <begin position="131"/>
        <end position="133"/>
    </location>
    <ligand>
        <name>ATP</name>
        <dbReference type="ChEBI" id="CHEBI:30616"/>
    </ligand>
</feature>
<feature type="binding site" evidence="1">
    <location>
        <position position="174"/>
    </location>
    <ligand>
        <name>ATP</name>
        <dbReference type="ChEBI" id="CHEBI:30616"/>
    </ligand>
</feature>
<feature type="binding site" evidence="1">
    <location>
        <position position="184"/>
    </location>
    <ligand>
        <name>ATP</name>
        <dbReference type="ChEBI" id="CHEBI:30616"/>
    </ligand>
</feature>
<feature type="binding site" evidence="1">
    <location>
        <position position="221"/>
    </location>
    <ligand>
        <name>ATP</name>
        <dbReference type="ChEBI" id="CHEBI:30616"/>
    </ligand>
</feature>
<feature type="binding site" evidence="1">
    <location>
        <position position="294"/>
    </location>
    <ligand>
        <name>DNA</name>
        <dbReference type="ChEBI" id="CHEBI:16991"/>
    </ligand>
</feature>
<feature type="binding site" evidence="1">
    <location>
        <position position="313"/>
    </location>
    <ligand>
        <name>DNA</name>
        <dbReference type="ChEBI" id="CHEBI:16991"/>
    </ligand>
</feature>
<feature type="binding site" evidence="1">
    <location>
        <position position="318"/>
    </location>
    <ligand>
        <name>DNA</name>
        <dbReference type="ChEBI" id="CHEBI:16991"/>
    </ligand>
</feature>
<sequence>MIEADRLISAGATIAEDVADRAIRPKLLAEYVGQPQVRSQMEIFIQAAKLRGDALDHLLIFGPPGLGKTTLANIVANEMGVNLRTTSGPVLEKAGDLAAMLTNLEPHDVLFIDEIHRLSPVVEEVLYPAMEDYQLDIMIGEGPAARSIKIDLPPFTLIGATTRAGSLTSPLRDRFGIVQRLEFYQVPDLQHIVGRSARHMGLEMSDDGALEVARRARGTPRIANRLLRRVRDFAEVKHDGAISAEIAAQALDMLNVDAEGFDYMDRKLLLAVIDKFFGGPVGLDNLAAAIGEERETIEDVLEPYLIQQGFLQRTPRGRMATVRAWNHFGITPPEMP</sequence>
<keyword id="KW-0067">ATP-binding</keyword>
<keyword id="KW-0963">Cytoplasm</keyword>
<keyword id="KW-0227">DNA damage</keyword>
<keyword id="KW-0233">DNA recombination</keyword>
<keyword id="KW-0234">DNA repair</keyword>
<keyword id="KW-0238">DNA-binding</keyword>
<keyword id="KW-0378">Hydrolase</keyword>
<keyword id="KW-0547">Nucleotide-binding</keyword>
<dbReference type="EC" id="3.6.4.-" evidence="1"/>
<dbReference type="EMBL" id="CP001120">
    <property type="protein sequence ID" value="ACF70058.1"/>
    <property type="molecule type" value="Genomic_DNA"/>
</dbReference>
<dbReference type="RefSeq" id="WP_000568504.1">
    <property type="nucleotide sequence ID" value="NC_011083.1"/>
</dbReference>
<dbReference type="SMR" id="B4T7Z2"/>
<dbReference type="KEGG" id="seh:SeHA_C2108"/>
<dbReference type="HOGENOM" id="CLU_055599_1_0_6"/>
<dbReference type="Proteomes" id="UP000001866">
    <property type="component" value="Chromosome"/>
</dbReference>
<dbReference type="GO" id="GO:0005737">
    <property type="term" value="C:cytoplasm"/>
    <property type="evidence" value="ECO:0007669"/>
    <property type="project" value="UniProtKB-SubCell"/>
</dbReference>
<dbReference type="GO" id="GO:0048476">
    <property type="term" value="C:Holliday junction resolvase complex"/>
    <property type="evidence" value="ECO:0007669"/>
    <property type="project" value="UniProtKB-UniRule"/>
</dbReference>
<dbReference type="GO" id="GO:0005524">
    <property type="term" value="F:ATP binding"/>
    <property type="evidence" value="ECO:0007669"/>
    <property type="project" value="UniProtKB-UniRule"/>
</dbReference>
<dbReference type="GO" id="GO:0016887">
    <property type="term" value="F:ATP hydrolysis activity"/>
    <property type="evidence" value="ECO:0007669"/>
    <property type="project" value="InterPro"/>
</dbReference>
<dbReference type="GO" id="GO:0000400">
    <property type="term" value="F:four-way junction DNA binding"/>
    <property type="evidence" value="ECO:0007669"/>
    <property type="project" value="UniProtKB-UniRule"/>
</dbReference>
<dbReference type="GO" id="GO:0009378">
    <property type="term" value="F:four-way junction helicase activity"/>
    <property type="evidence" value="ECO:0007669"/>
    <property type="project" value="InterPro"/>
</dbReference>
<dbReference type="GO" id="GO:0006310">
    <property type="term" value="P:DNA recombination"/>
    <property type="evidence" value="ECO:0007669"/>
    <property type="project" value="UniProtKB-UniRule"/>
</dbReference>
<dbReference type="GO" id="GO:0006281">
    <property type="term" value="P:DNA repair"/>
    <property type="evidence" value="ECO:0007669"/>
    <property type="project" value="UniProtKB-UniRule"/>
</dbReference>
<dbReference type="CDD" id="cd00009">
    <property type="entry name" value="AAA"/>
    <property type="match status" value="1"/>
</dbReference>
<dbReference type="FunFam" id="1.10.10.10:FF:000086">
    <property type="entry name" value="Holliday junction ATP-dependent DNA helicase RuvB"/>
    <property type="match status" value="1"/>
</dbReference>
<dbReference type="FunFam" id="1.10.8.60:FF:000023">
    <property type="entry name" value="Holliday junction ATP-dependent DNA helicase RuvB"/>
    <property type="match status" value="1"/>
</dbReference>
<dbReference type="FunFam" id="3.40.50.300:FF:000073">
    <property type="entry name" value="Holliday junction ATP-dependent DNA helicase RuvB"/>
    <property type="match status" value="1"/>
</dbReference>
<dbReference type="Gene3D" id="1.10.8.60">
    <property type="match status" value="1"/>
</dbReference>
<dbReference type="Gene3D" id="3.40.50.300">
    <property type="entry name" value="P-loop containing nucleotide triphosphate hydrolases"/>
    <property type="match status" value="1"/>
</dbReference>
<dbReference type="Gene3D" id="1.10.10.10">
    <property type="entry name" value="Winged helix-like DNA-binding domain superfamily/Winged helix DNA-binding domain"/>
    <property type="match status" value="1"/>
</dbReference>
<dbReference type="HAMAP" id="MF_00016">
    <property type="entry name" value="DNA_HJ_migration_RuvB"/>
    <property type="match status" value="1"/>
</dbReference>
<dbReference type="InterPro" id="IPR003593">
    <property type="entry name" value="AAA+_ATPase"/>
</dbReference>
<dbReference type="InterPro" id="IPR041445">
    <property type="entry name" value="AAA_lid_4"/>
</dbReference>
<dbReference type="InterPro" id="IPR004605">
    <property type="entry name" value="DNA_helicase_Holl-junc_RuvB"/>
</dbReference>
<dbReference type="InterPro" id="IPR027417">
    <property type="entry name" value="P-loop_NTPase"/>
</dbReference>
<dbReference type="InterPro" id="IPR008824">
    <property type="entry name" value="RuvB-like_N"/>
</dbReference>
<dbReference type="InterPro" id="IPR008823">
    <property type="entry name" value="RuvB_C"/>
</dbReference>
<dbReference type="InterPro" id="IPR036388">
    <property type="entry name" value="WH-like_DNA-bd_sf"/>
</dbReference>
<dbReference type="InterPro" id="IPR036390">
    <property type="entry name" value="WH_DNA-bd_sf"/>
</dbReference>
<dbReference type="NCBIfam" id="NF000868">
    <property type="entry name" value="PRK00080.1"/>
    <property type="match status" value="1"/>
</dbReference>
<dbReference type="NCBIfam" id="TIGR00635">
    <property type="entry name" value="ruvB"/>
    <property type="match status" value="1"/>
</dbReference>
<dbReference type="PANTHER" id="PTHR42848">
    <property type="match status" value="1"/>
</dbReference>
<dbReference type="PANTHER" id="PTHR42848:SF1">
    <property type="entry name" value="HOLLIDAY JUNCTION BRANCH MIGRATION COMPLEX SUBUNIT RUVB"/>
    <property type="match status" value="1"/>
</dbReference>
<dbReference type="Pfam" id="PF17864">
    <property type="entry name" value="AAA_lid_4"/>
    <property type="match status" value="1"/>
</dbReference>
<dbReference type="Pfam" id="PF05491">
    <property type="entry name" value="RuvB_C"/>
    <property type="match status" value="1"/>
</dbReference>
<dbReference type="Pfam" id="PF05496">
    <property type="entry name" value="RuvB_N"/>
    <property type="match status" value="1"/>
</dbReference>
<dbReference type="SMART" id="SM00382">
    <property type="entry name" value="AAA"/>
    <property type="match status" value="1"/>
</dbReference>
<dbReference type="SUPFAM" id="SSF52540">
    <property type="entry name" value="P-loop containing nucleoside triphosphate hydrolases"/>
    <property type="match status" value="1"/>
</dbReference>
<dbReference type="SUPFAM" id="SSF46785">
    <property type="entry name" value="Winged helix' DNA-binding domain"/>
    <property type="match status" value="1"/>
</dbReference>
<gene>
    <name evidence="1" type="primary">ruvB</name>
    <name type="ordered locus">SeHA_C2108</name>
</gene>
<name>RUVB_SALHS</name>
<proteinExistence type="inferred from homology"/>